<dbReference type="EMBL" id="AL589182">
    <property type="status" value="NOT_ANNOTATED_CDS"/>
    <property type="molecule type" value="Genomic_DNA"/>
</dbReference>
<dbReference type="EMBL" id="AL929601">
    <property type="status" value="NOT_ANNOTATED_CDS"/>
    <property type="molecule type" value="Genomic_DNA"/>
</dbReference>
<dbReference type="CCDS" id="CCDS73609.1"/>
<dbReference type="RefSeq" id="NP_001138914.1">
    <property type="nucleotide sequence ID" value="NM_001145442.1"/>
</dbReference>
<dbReference type="SMR" id="A6NI47"/>
<dbReference type="BioGRID" id="534980">
    <property type="interactions" value="2"/>
</dbReference>
<dbReference type="STRING" id="9606.ENSP00000448062"/>
<dbReference type="iPTMnet" id="A6NI47"/>
<dbReference type="PhosphoSitePlus" id="A6NI47"/>
<dbReference type="BioMuta" id="POTEM"/>
<dbReference type="jPOST" id="A6NI47"/>
<dbReference type="MassIVE" id="A6NI47"/>
<dbReference type="PaxDb" id="9606-ENSP00000448062"/>
<dbReference type="PeptideAtlas" id="A6NI47"/>
<dbReference type="Antibodypedia" id="58500">
    <property type="antibodies" value="15 antibodies from 5 providers"/>
</dbReference>
<dbReference type="DNASU" id="641455"/>
<dbReference type="Ensembl" id="ENST00000547889.6">
    <property type="protein sequence ID" value="ENSP00000448062.2"/>
    <property type="gene ID" value="ENSG00000222036.8"/>
</dbReference>
<dbReference type="GeneID" id="641455"/>
<dbReference type="KEGG" id="hsa:641455"/>
<dbReference type="MANE-Select" id="ENST00000547889.6">
    <property type="protein sequence ID" value="ENSP00000448062.2"/>
    <property type="RefSeq nucleotide sequence ID" value="NM_001145442.1"/>
    <property type="RefSeq protein sequence ID" value="NP_001138914.1"/>
</dbReference>
<dbReference type="AGR" id="HGNC:37096"/>
<dbReference type="CTD" id="641455"/>
<dbReference type="GeneCards" id="POTEM"/>
<dbReference type="HGNC" id="HGNC:37096">
    <property type="gene designation" value="POTEM"/>
</dbReference>
<dbReference type="HPA" id="ENSG00000222036">
    <property type="expression patterns" value="Tissue enriched (prostate)"/>
</dbReference>
<dbReference type="neXtProt" id="NX_A6NI47"/>
<dbReference type="OpenTargets" id="ENSG00000222036"/>
<dbReference type="PharmGKB" id="PA165479276"/>
<dbReference type="VEuPathDB" id="HostDB:ENSG00000222036"/>
<dbReference type="eggNOG" id="KOG0676">
    <property type="taxonomic scope" value="Eukaryota"/>
</dbReference>
<dbReference type="GeneTree" id="ENSGT00940000163068"/>
<dbReference type="HOGENOM" id="CLU_000134_9_2_1"/>
<dbReference type="InParanoid" id="A6NI47"/>
<dbReference type="OMA" id="VCWERPS"/>
<dbReference type="OrthoDB" id="9537854at2759"/>
<dbReference type="PAN-GO" id="A6NI47">
    <property type="GO annotations" value="0 GO annotations based on evolutionary models"/>
</dbReference>
<dbReference type="PhylomeDB" id="A6NI47"/>
<dbReference type="TreeFam" id="TF337879"/>
<dbReference type="PathwayCommons" id="A6NI47"/>
<dbReference type="SignaLink" id="A6NI47"/>
<dbReference type="BioGRID-ORCS" id="641455">
    <property type="hits" value="197 hits in 1009 CRISPR screens"/>
</dbReference>
<dbReference type="ChiTaRS" id="POTEM">
    <property type="organism name" value="human"/>
</dbReference>
<dbReference type="GenomeRNAi" id="641455"/>
<dbReference type="Pharos" id="A6NI47">
    <property type="development level" value="Tdark"/>
</dbReference>
<dbReference type="PRO" id="PR:A6NI47"/>
<dbReference type="Proteomes" id="UP000005640">
    <property type="component" value="Chromosome 14"/>
</dbReference>
<dbReference type="RNAct" id="A6NI47">
    <property type="molecule type" value="protein"/>
</dbReference>
<dbReference type="Bgee" id="ENSG00000222036">
    <property type="expression patterns" value="Expressed in buccal mucosa cell and 65 other cell types or tissues"/>
</dbReference>
<dbReference type="ExpressionAtlas" id="A6NI47">
    <property type="expression patterns" value="baseline and differential"/>
</dbReference>
<dbReference type="Gene3D" id="1.25.40.20">
    <property type="entry name" value="Ankyrin repeat-containing domain"/>
    <property type="match status" value="1"/>
</dbReference>
<dbReference type="InterPro" id="IPR050657">
    <property type="entry name" value="Ankyrin_repeat_domain"/>
</dbReference>
<dbReference type="InterPro" id="IPR002110">
    <property type="entry name" value="Ankyrin_rpt"/>
</dbReference>
<dbReference type="InterPro" id="IPR036770">
    <property type="entry name" value="Ankyrin_rpt-contain_sf"/>
</dbReference>
<dbReference type="PANTHER" id="PTHR24147">
    <property type="entry name" value="ANKYRIN REPEAT DOMAIN 36-RELATED"/>
    <property type="match status" value="1"/>
</dbReference>
<dbReference type="PANTHER" id="PTHR24147:SF66">
    <property type="entry name" value="POTE ANKYRIN DOMAIN FAMILY MEMBER D"/>
    <property type="match status" value="1"/>
</dbReference>
<dbReference type="Pfam" id="PF00023">
    <property type="entry name" value="Ank"/>
    <property type="match status" value="1"/>
</dbReference>
<dbReference type="Pfam" id="PF12796">
    <property type="entry name" value="Ank_2"/>
    <property type="match status" value="2"/>
</dbReference>
<dbReference type="PRINTS" id="PR01415">
    <property type="entry name" value="ANKYRIN"/>
</dbReference>
<dbReference type="SMART" id="SM00248">
    <property type="entry name" value="ANK"/>
    <property type="match status" value="6"/>
</dbReference>
<dbReference type="SUPFAM" id="SSF48403">
    <property type="entry name" value="Ankyrin repeat"/>
    <property type="match status" value="1"/>
</dbReference>
<dbReference type="PROSITE" id="PS50297">
    <property type="entry name" value="ANK_REP_REGION"/>
    <property type="match status" value="1"/>
</dbReference>
<dbReference type="PROSITE" id="PS50088">
    <property type="entry name" value="ANK_REPEAT"/>
    <property type="match status" value="4"/>
</dbReference>
<protein>
    <recommendedName>
        <fullName>Putative POTE ankyrin domain family member M</fullName>
    </recommendedName>
</protein>
<keyword id="KW-0040">ANK repeat</keyword>
<keyword id="KW-1185">Reference proteome</keyword>
<keyword id="KW-0677">Repeat</keyword>
<name>POTEM_HUMAN</name>
<reference key="1">
    <citation type="journal article" date="2003" name="Nature">
        <title>The DNA sequence and analysis of human chromosome 14.</title>
        <authorList>
            <person name="Heilig R."/>
            <person name="Eckenberg R."/>
            <person name="Petit J.-L."/>
            <person name="Fonknechten N."/>
            <person name="Da Silva C."/>
            <person name="Cattolico L."/>
            <person name="Levy M."/>
            <person name="Barbe V."/>
            <person name="De Berardinis V."/>
            <person name="Ureta-Vidal A."/>
            <person name="Pelletier E."/>
            <person name="Vico V."/>
            <person name="Anthouard V."/>
            <person name="Rowen L."/>
            <person name="Madan A."/>
            <person name="Qin S."/>
            <person name="Sun H."/>
            <person name="Du H."/>
            <person name="Pepin K."/>
            <person name="Artiguenave F."/>
            <person name="Robert C."/>
            <person name="Cruaud C."/>
            <person name="Bruels T."/>
            <person name="Jaillon O."/>
            <person name="Friedlander L."/>
            <person name="Samson G."/>
            <person name="Brottier P."/>
            <person name="Cure S."/>
            <person name="Segurens B."/>
            <person name="Aniere F."/>
            <person name="Samain S."/>
            <person name="Crespeau H."/>
            <person name="Abbasi N."/>
            <person name="Aiach N."/>
            <person name="Boscus D."/>
            <person name="Dickhoff R."/>
            <person name="Dors M."/>
            <person name="Dubois I."/>
            <person name="Friedman C."/>
            <person name="Gouyvenoux M."/>
            <person name="James R."/>
            <person name="Madan A."/>
            <person name="Mairey-Estrada B."/>
            <person name="Mangenot S."/>
            <person name="Martins N."/>
            <person name="Menard M."/>
            <person name="Oztas S."/>
            <person name="Ratcliffe A."/>
            <person name="Shaffer T."/>
            <person name="Trask B."/>
            <person name="Vacherie B."/>
            <person name="Bellemere C."/>
            <person name="Belser C."/>
            <person name="Besnard-Gonnet M."/>
            <person name="Bartol-Mavel D."/>
            <person name="Boutard M."/>
            <person name="Briez-Silla S."/>
            <person name="Combette S."/>
            <person name="Dufosse-Laurent V."/>
            <person name="Ferron C."/>
            <person name="Lechaplais C."/>
            <person name="Louesse C."/>
            <person name="Muselet D."/>
            <person name="Magdelenat G."/>
            <person name="Pateau E."/>
            <person name="Petit E."/>
            <person name="Sirvain-Trukniewicz P."/>
            <person name="Trybou A."/>
            <person name="Vega-Czarny N."/>
            <person name="Bataille E."/>
            <person name="Bluet E."/>
            <person name="Bordelais I."/>
            <person name="Dubois M."/>
            <person name="Dumont C."/>
            <person name="Guerin T."/>
            <person name="Haffray S."/>
            <person name="Hammadi R."/>
            <person name="Muanga J."/>
            <person name="Pellouin V."/>
            <person name="Robert D."/>
            <person name="Wunderle E."/>
            <person name="Gauguet G."/>
            <person name="Roy A."/>
            <person name="Sainte-Marthe L."/>
            <person name="Verdier J."/>
            <person name="Verdier-Discala C."/>
            <person name="Hillier L.W."/>
            <person name="Fulton L."/>
            <person name="McPherson J."/>
            <person name="Matsuda F."/>
            <person name="Wilson R."/>
            <person name="Scarpelli C."/>
            <person name="Gyapay G."/>
            <person name="Wincker P."/>
            <person name="Saurin W."/>
            <person name="Quetier F."/>
            <person name="Waterston R."/>
            <person name="Hood L."/>
            <person name="Weissenbach J."/>
        </authorList>
    </citation>
    <scope>NUCLEOTIDE SEQUENCE [LARGE SCALE GENOMIC DNA]</scope>
</reference>
<evidence type="ECO:0000256" key="1">
    <source>
        <dbReference type="SAM" id="MobiDB-lite"/>
    </source>
</evidence>
<evidence type="ECO:0000305" key="2"/>
<proteinExistence type="inferred from homology"/>
<gene>
    <name type="primary">POTEM</name>
</gene>
<comment type="similarity">
    <text evidence="2">Belongs to the POTE family.</text>
</comment>
<accession>A6NI47</accession>
<organism>
    <name type="scientific">Homo sapiens</name>
    <name type="common">Human</name>
    <dbReference type="NCBI Taxonomy" id="9606"/>
    <lineage>
        <taxon>Eukaryota</taxon>
        <taxon>Metazoa</taxon>
        <taxon>Chordata</taxon>
        <taxon>Craniata</taxon>
        <taxon>Vertebrata</taxon>
        <taxon>Euteleostomi</taxon>
        <taxon>Mammalia</taxon>
        <taxon>Eutheria</taxon>
        <taxon>Euarchontoglires</taxon>
        <taxon>Primates</taxon>
        <taxon>Haplorrhini</taxon>
        <taxon>Catarrhini</taxon>
        <taxon>Hominidae</taxon>
        <taxon>Homo</taxon>
    </lineage>
</organism>
<sequence length="508" mass="57067">MVAEAGSMPAASSVKKPFGLRSKMGKWCRHCFPWCRGSGKSNVGTSGDHDDSAMKTLRSKMGKWCRHCFPWCRGSGKSNVGTSGDHDDSAMKTLRSKMGKWCCHCFPCCRGSGKSKVGPWGDYDDSAFMEPRYHVRREDLDKLHRAAWWGKVPRKDLIVMLKDTDMNKKDKQKRTALHLASANGNSEVVKLLLDRRCQLNILDNKKRTALTKAVQCQEDECALMLLEHGTDPNIPDEYGNTALHYAIYNEDKLMAKALLLYGADIESKNKHGLTPLLLGVHEQKQQVVKFLIKKKANLNALDRYGRTVLILAVCCGSASIVSLLLEQNIDVSSQDLSGQTAREYAVSSRHNVICQLLSDYKEKQILKVSSENSNPEQDLKLTSEEESQRLKGSENSQPEEMSQEPEINKGGDRKVEEEMKKHGSTHMGFPENLPNGATADNGDDGLIPPRKSRTPESQQFPDTENEQYHSDEQNDTQKQLSEEQNTGILQDEILIHEEKQIEVAENEF</sequence>
<feature type="chain" id="PRO_0000332150" description="Putative POTE ankyrin domain family member M">
    <location>
        <begin position="1"/>
        <end position="508"/>
    </location>
</feature>
<feature type="repeat" description="ANK 1">
    <location>
        <begin position="172"/>
        <end position="201"/>
    </location>
</feature>
<feature type="repeat" description="ANK 2">
    <location>
        <begin position="205"/>
        <end position="234"/>
    </location>
</feature>
<feature type="repeat" description="ANK 3">
    <location>
        <begin position="238"/>
        <end position="267"/>
    </location>
</feature>
<feature type="repeat" description="ANK 4">
    <location>
        <begin position="271"/>
        <end position="300"/>
    </location>
</feature>
<feature type="repeat" description="ANK 5">
    <location>
        <begin position="304"/>
        <end position="333"/>
    </location>
</feature>
<feature type="region of interest" description="Disordered" evidence="1">
    <location>
        <begin position="369"/>
        <end position="487"/>
    </location>
</feature>
<feature type="compositionally biased region" description="Basic and acidic residues" evidence="1">
    <location>
        <begin position="377"/>
        <end position="392"/>
    </location>
</feature>
<feature type="compositionally biased region" description="Basic and acidic residues" evidence="1">
    <location>
        <begin position="406"/>
        <end position="421"/>
    </location>
</feature>
<feature type="compositionally biased region" description="Polar residues" evidence="1">
    <location>
        <begin position="476"/>
        <end position="487"/>
    </location>
</feature>